<dbReference type="EMBL" id="CP000800">
    <property type="protein sequence ID" value="ABV17585.1"/>
    <property type="molecule type" value="Genomic_DNA"/>
</dbReference>
<dbReference type="RefSeq" id="WP_000091955.1">
    <property type="nucleotide sequence ID" value="NC_009801.1"/>
</dbReference>
<dbReference type="SMR" id="A7ZTI8"/>
<dbReference type="GeneID" id="93778350"/>
<dbReference type="KEGG" id="ecw:EcE24377A_4138"/>
<dbReference type="HOGENOM" id="CLU_064548_3_1_6"/>
<dbReference type="Proteomes" id="UP000001122">
    <property type="component" value="Chromosome"/>
</dbReference>
<dbReference type="GO" id="GO:0022625">
    <property type="term" value="C:cytosolic large ribosomal subunit"/>
    <property type="evidence" value="ECO:0007669"/>
    <property type="project" value="TreeGrafter"/>
</dbReference>
<dbReference type="GO" id="GO:0003735">
    <property type="term" value="F:structural constituent of ribosome"/>
    <property type="evidence" value="ECO:0007669"/>
    <property type="project" value="InterPro"/>
</dbReference>
<dbReference type="GO" id="GO:0006412">
    <property type="term" value="P:translation"/>
    <property type="evidence" value="ECO:0007669"/>
    <property type="project" value="UniProtKB-UniRule"/>
</dbReference>
<dbReference type="FunFam" id="2.30.170.40:FF:000001">
    <property type="entry name" value="50S ribosomal protein L28"/>
    <property type="match status" value="1"/>
</dbReference>
<dbReference type="Gene3D" id="2.30.170.40">
    <property type="entry name" value="Ribosomal protein L28/L24"/>
    <property type="match status" value="1"/>
</dbReference>
<dbReference type="HAMAP" id="MF_00373">
    <property type="entry name" value="Ribosomal_bL28"/>
    <property type="match status" value="1"/>
</dbReference>
<dbReference type="InterPro" id="IPR026569">
    <property type="entry name" value="Ribosomal_bL28"/>
</dbReference>
<dbReference type="InterPro" id="IPR034704">
    <property type="entry name" value="Ribosomal_bL28/bL31-like_sf"/>
</dbReference>
<dbReference type="InterPro" id="IPR001383">
    <property type="entry name" value="Ribosomal_bL28_bact-type"/>
</dbReference>
<dbReference type="InterPro" id="IPR037147">
    <property type="entry name" value="Ribosomal_bL28_sf"/>
</dbReference>
<dbReference type="NCBIfam" id="TIGR00009">
    <property type="entry name" value="L28"/>
    <property type="match status" value="1"/>
</dbReference>
<dbReference type="PANTHER" id="PTHR13528">
    <property type="entry name" value="39S RIBOSOMAL PROTEIN L28, MITOCHONDRIAL"/>
    <property type="match status" value="1"/>
</dbReference>
<dbReference type="PANTHER" id="PTHR13528:SF2">
    <property type="entry name" value="LARGE RIBOSOMAL SUBUNIT PROTEIN BL28M"/>
    <property type="match status" value="1"/>
</dbReference>
<dbReference type="Pfam" id="PF00830">
    <property type="entry name" value="Ribosomal_L28"/>
    <property type="match status" value="1"/>
</dbReference>
<dbReference type="SUPFAM" id="SSF143800">
    <property type="entry name" value="L28p-like"/>
    <property type="match status" value="1"/>
</dbReference>
<protein>
    <recommendedName>
        <fullName evidence="1">Large ribosomal subunit protein bL28</fullName>
    </recommendedName>
    <alternativeName>
        <fullName evidence="2">50S ribosomal protein L28</fullName>
    </alternativeName>
</protein>
<feature type="chain" id="PRO_1000059949" description="Large ribosomal subunit protein bL28">
    <location>
        <begin position="1"/>
        <end position="78"/>
    </location>
</feature>
<keyword id="KW-1185">Reference proteome</keyword>
<keyword id="KW-0687">Ribonucleoprotein</keyword>
<keyword id="KW-0689">Ribosomal protein</keyword>
<proteinExistence type="inferred from homology"/>
<comment type="similarity">
    <text evidence="1">Belongs to the bacterial ribosomal protein bL28 family.</text>
</comment>
<organism>
    <name type="scientific">Escherichia coli O139:H28 (strain E24377A / ETEC)</name>
    <dbReference type="NCBI Taxonomy" id="331111"/>
    <lineage>
        <taxon>Bacteria</taxon>
        <taxon>Pseudomonadati</taxon>
        <taxon>Pseudomonadota</taxon>
        <taxon>Gammaproteobacteria</taxon>
        <taxon>Enterobacterales</taxon>
        <taxon>Enterobacteriaceae</taxon>
        <taxon>Escherichia</taxon>
    </lineage>
</organism>
<sequence length="78" mass="9006">MSRVCQVTGKRPVTGNNRSHALNATKRRFLPNLHSHRFWVESEKRFVTLRVSAKGMRVIDKKGIDTVLAELRARGEKY</sequence>
<gene>
    <name evidence="1" type="primary">rpmB</name>
    <name type="ordered locus">EcE24377A_4138</name>
</gene>
<name>RL28_ECO24</name>
<evidence type="ECO:0000255" key="1">
    <source>
        <dbReference type="HAMAP-Rule" id="MF_00373"/>
    </source>
</evidence>
<evidence type="ECO:0000305" key="2"/>
<accession>A7ZTI8</accession>
<reference key="1">
    <citation type="journal article" date="2008" name="J. Bacteriol.">
        <title>The pangenome structure of Escherichia coli: comparative genomic analysis of E. coli commensal and pathogenic isolates.</title>
        <authorList>
            <person name="Rasko D.A."/>
            <person name="Rosovitz M.J."/>
            <person name="Myers G.S.A."/>
            <person name="Mongodin E.F."/>
            <person name="Fricke W.F."/>
            <person name="Gajer P."/>
            <person name="Crabtree J."/>
            <person name="Sebaihia M."/>
            <person name="Thomson N.R."/>
            <person name="Chaudhuri R."/>
            <person name="Henderson I.R."/>
            <person name="Sperandio V."/>
            <person name="Ravel J."/>
        </authorList>
    </citation>
    <scope>NUCLEOTIDE SEQUENCE [LARGE SCALE GENOMIC DNA]</scope>
    <source>
        <strain>E24377A / ETEC</strain>
    </source>
</reference>